<keyword id="KW-0216">Detoxification</keyword>
<keyword id="KW-0274">FAD</keyword>
<keyword id="KW-0285">Flavoprotein</keyword>
<keyword id="KW-0349">Heme</keyword>
<keyword id="KW-0408">Iron</keyword>
<keyword id="KW-0479">Metal-binding</keyword>
<keyword id="KW-0520">NAD</keyword>
<keyword id="KW-0521">NADP</keyword>
<keyword id="KW-0560">Oxidoreductase</keyword>
<keyword id="KW-0561">Oxygen transport</keyword>
<keyword id="KW-0813">Transport</keyword>
<name>HMP_BORBR</name>
<comment type="function">
    <text evidence="1">Is involved in NO detoxification in an aerobic process, termed nitric oxide dioxygenase (NOD) reaction that utilizes O(2) and NAD(P)H to convert NO to nitrate, which protects the bacterium from various noxious nitrogen compounds. Therefore, plays a central role in the inducible response to nitrosative stress.</text>
</comment>
<comment type="catalytic activity">
    <reaction evidence="1">
        <text>2 nitric oxide + NADPH + 2 O2 = 2 nitrate + NADP(+) + H(+)</text>
        <dbReference type="Rhea" id="RHEA:19465"/>
        <dbReference type="ChEBI" id="CHEBI:15378"/>
        <dbReference type="ChEBI" id="CHEBI:15379"/>
        <dbReference type="ChEBI" id="CHEBI:16480"/>
        <dbReference type="ChEBI" id="CHEBI:17632"/>
        <dbReference type="ChEBI" id="CHEBI:57783"/>
        <dbReference type="ChEBI" id="CHEBI:58349"/>
        <dbReference type="EC" id="1.14.12.17"/>
    </reaction>
</comment>
<comment type="catalytic activity">
    <reaction evidence="1">
        <text>2 nitric oxide + NADH + 2 O2 = 2 nitrate + NAD(+) + H(+)</text>
        <dbReference type="Rhea" id="RHEA:19469"/>
        <dbReference type="ChEBI" id="CHEBI:15378"/>
        <dbReference type="ChEBI" id="CHEBI:15379"/>
        <dbReference type="ChEBI" id="CHEBI:16480"/>
        <dbReference type="ChEBI" id="CHEBI:17632"/>
        <dbReference type="ChEBI" id="CHEBI:57540"/>
        <dbReference type="ChEBI" id="CHEBI:57945"/>
        <dbReference type="EC" id="1.14.12.17"/>
    </reaction>
</comment>
<comment type="cofactor">
    <cofactor evidence="1">
        <name>heme b</name>
        <dbReference type="ChEBI" id="CHEBI:60344"/>
    </cofactor>
    <text evidence="1">Binds 1 heme b (iron(II)-protoporphyrin IX) group per subunit.</text>
</comment>
<comment type="cofactor">
    <cofactor evidence="1">
        <name>FAD</name>
        <dbReference type="ChEBI" id="CHEBI:57692"/>
    </cofactor>
    <text evidence="1">Binds 1 FAD per subunit.</text>
</comment>
<comment type="domain">
    <text>Consists of two distinct domains; an N-terminal heme-containing oxygen-binding domain and a C-terminal reductase domain with binding sites for FAD and NAD(P)H.</text>
</comment>
<comment type="similarity">
    <text evidence="1">Belongs to the globin family. Two-domain flavohemoproteins subfamily.</text>
</comment>
<comment type="similarity">
    <text evidence="1">In the C-terminal section; belongs to the flavoprotein pyridine nucleotide cytochrome reductase family.</text>
</comment>
<proteinExistence type="inferred from homology"/>
<sequence length="402" mass="43723">MLSPEVRALVKATAPVLKEHGEALTRHFYTRMLGGNPELRQLFNQGHQQSGQQQQALAAAVAAYAEHIDDPSVLLPVVERIAHKHVSLGVRAEHYAIVGKHLLASIREVLGEAATDELIDAWAAAYGQLADLLIGRERALYAAAASRDGGWTGWRAFKVVRKTPESAEITSFYLAPADGGATPDYLPGQYVSVRVYVPELGLMQPRQYSLSEAPGMPGQLRISVKREAGSPAGMVSGTLHNRINEGDVLDVSPPQGDFTLDAEDGRPVVLLSGGVGLTPMVSMLNHLTARDDGRQIRFVHACREAGVHAMKEHINALAAKRPNVRKAVFYERVGADDRRGVDYDYEGRVDLHAIRDEVILPDADYYLCGPLPFMQAQRRALADLGVAEHRIHAEVFGTGGVA</sequence>
<protein>
    <recommendedName>
        <fullName evidence="1">Flavohemoprotein</fullName>
    </recommendedName>
    <alternativeName>
        <fullName evidence="1">Flavohemoglobin</fullName>
    </alternativeName>
    <alternativeName>
        <fullName evidence="1">Hemoglobin-like protein</fullName>
    </alternativeName>
    <alternativeName>
        <fullName evidence="1">Nitric oxide dioxygenase</fullName>
        <shortName evidence="1">NO oxygenase</shortName>
        <shortName evidence="1">NOD</shortName>
        <ecNumber evidence="1">1.14.12.17</ecNumber>
    </alternativeName>
</protein>
<reference key="1">
    <citation type="journal article" date="2003" name="Nat. Genet.">
        <title>Comparative analysis of the genome sequences of Bordetella pertussis, Bordetella parapertussis and Bordetella bronchiseptica.</title>
        <authorList>
            <person name="Parkhill J."/>
            <person name="Sebaihia M."/>
            <person name="Preston A."/>
            <person name="Murphy L.D."/>
            <person name="Thomson N.R."/>
            <person name="Harris D.E."/>
            <person name="Holden M.T.G."/>
            <person name="Churcher C.M."/>
            <person name="Bentley S.D."/>
            <person name="Mungall K.L."/>
            <person name="Cerdeno-Tarraga A.-M."/>
            <person name="Temple L."/>
            <person name="James K.D."/>
            <person name="Harris B."/>
            <person name="Quail M.A."/>
            <person name="Achtman M."/>
            <person name="Atkin R."/>
            <person name="Baker S."/>
            <person name="Basham D."/>
            <person name="Bason N."/>
            <person name="Cherevach I."/>
            <person name="Chillingworth T."/>
            <person name="Collins M."/>
            <person name="Cronin A."/>
            <person name="Davis P."/>
            <person name="Doggett J."/>
            <person name="Feltwell T."/>
            <person name="Goble A."/>
            <person name="Hamlin N."/>
            <person name="Hauser H."/>
            <person name="Holroyd S."/>
            <person name="Jagels K."/>
            <person name="Leather S."/>
            <person name="Moule S."/>
            <person name="Norberczak H."/>
            <person name="O'Neil S."/>
            <person name="Ormond D."/>
            <person name="Price C."/>
            <person name="Rabbinowitsch E."/>
            <person name="Rutter S."/>
            <person name="Sanders M."/>
            <person name="Saunders D."/>
            <person name="Seeger K."/>
            <person name="Sharp S."/>
            <person name="Simmonds M."/>
            <person name="Skelton J."/>
            <person name="Squares R."/>
            <person name="Squares S."/>
            <person name="Stevens K."/>
            <person name="Unwin L."/>
            <person name="Whitehead S."/>
            <person name="Barrell B.G."/>
            <person name="Maskell D.J."/>
        </authorList>
    </citation>
    <scope>NUCLEOTIDE SEQUENCE [LARGE SCALE GENOMIC DNA]</scope>
    <source>
        <strain>ATCC BAA-588 / NCTC 13252 / RB50</strain>
    </source>
</reference>
<gene>
    <name evidence="1" type="primary">hmp</name>
    <name type="synonym">fhp</name>
    <name type="ordered locus">BB3091</name>
</gene>
<feature type="chain" id="PRO_0000052425" description="Flavohemoprotein">
    <location>
        <begin position="1"/>
        <end position="402"/>
    </location>
</feature>
<feature type="domain" description="Globin" evidence="2">
    <location>
        <begin position="1"/>
        <end position="138"/>
    </location>
</feature>
<feature type="domain" description="FAD-binding FR-type" evidence="1">
    <location>
        <begin position="152"/>
        <end position="261"/>
    </location>
</feature>
<feature type="region of interest" description="Reductase">
    <location>
        <begin position="149"/>
        <end position="402"/>
    </location>
</feature>
<feature type="active site" description="Charge relay system" evidence="1">
    <location>
        <position position="95"/>
    </location>
</feature>
<feature type="active site" description="Charge relay system" evidence="1">
    <location>
        <position position="137"/>
    </location>
</feature>
<feature type="binding site" description="proximal binding residue" evidence="1">
    <location>
        <position position="85"/>
    </location>
    <ligand>
        <name>heme b</name>
        <dbReference type="ChEBI" id="CHEBI:60344"/>
    </ligand>
    <ligandPart>
        <name>Fe</name>
        <dbReference type="ChEBI" id="CHEBI:18248"/>
    </ligandPart>
</feature>
<feature type="binding site" evidence="1">
    <location>
        <position position="190"/>
    </location>
    <ligand>
        <name>FAD</name>
        <dbReference type="ChEBI" id="CHEBI:57692"/>
    </ligand>
</feature>
<feature type="binding site" evidence="1">
    <location>
        <begin position="206"/>
        <end position="209"/>
    </location>
    <ligand>
        <name>FAD</name>
        <dbReference type="ChEBI" id="CHEBI:57692"/>
    </ligand>
</feature>
<feature type="binding site" evidence="1">
    <location>
        <begin position="274"/>
        <end position="279"/>
    </location>
    <ligand>
        <name>NADP(+)</name>
        <dbReference type="ChEBI" id="CHEBI:58349"/>
    </ligand>
</feature>
<feature type="binding site" evidence="1">
    <location>
        <begin position="395"/>
        <end position="398"/>
    </location>
    <ligand>
        <name>FAD</name>
        <dbReference type="ChEBI" id="CHEBI:57692"/>
    </ligand>
</feature>
<feature type="site" description="Involved in heme-bound ligand stabilization and O-O bond activation" evidence="1">
    <location>
        <position position="29"/>
    </location>
</feature>
<feature type="site" description="Influences the redox potential of the prosthetic heme and FAD groups" evidence="1">
    <location>
        <position position="84"/>
    </location>
</feature>
<feature type="site" description="Influences the redox potential of the prosthetic heme and FAD groups" evidence="1">
    <location>
        <position position="394"/>
    </location>
</feature>
<accession>Q7WHW5</accession>
<organism>
    <name type="scientific">Bordetella bronchiseptica (strain ATCC BAA-588 / NCTC 13252 / RB50)</name>
    <name type="common">Alcaligenes bronchisepticus</name>
    <dbReference type="NCBI Taxonomy" id="257310"/>
    <lineage>
        <taxon>Bacteria</taxon>
        <taxon>Pseudomonadati</taxon>
        <taxon>Pseudomonadota</taxon>
        <taxon>Betaproteobacteria</taxon>
        <taxon>Burkholderiales</taxon>
        <taxon>Alcaligenaceae</taxon>
        <taxon>Bordetella</taxon>
    </lineage>
</organism>
<evidence type="ECO:0000255" key="1">
    <source>
        <dbReference type="HAMAP-Rule" id="MF_01252"/>
    </source>
</evidence>
<evidence type="ECO:0000255" key="2">
    <source>
        <dbReference type="PROSITE-ProRule" id="PRU00238"/>
    </source>
</evidence>
<dbReference type="EC" id="1.14.12.17" evidence="1"/>
<dbReference type="EMBL" id="BX640446">
    <property type="protein sequence ID" value="CAE33583.1"/>
    <property type="molecule type" value="Genomic_DNA"/>
</dbReference>
<dbReference type="SMR" id="Q7WHW5"/>
<dbReference type="KEGG" id="bbr:BB3091"/>
<dbReference type="eggNOG" id="COG1017">
    <property type="taxonomic scope" value="Bacteria"/>
</dbReference>
<dbReference type="eggNOG" id="COG1018">
    <property type="taxonomic scope" value="Bacteria"/>
</dbReference>
<dbReference type="HOGENOM" id="CLU_003827_12_0_4"/>
<dbReference type="Proteomes" id="UP000001027">
    <property type="component" value="Chromosome"/>
</dbReference>
<dbReference type="GO" id="GO:0071949">
    <property type="term" value="F:FAD binding"/>
    <property type="evidence" value="ECO:0007669"/>
    <property type="project" value="InterPro"/>
</dbReference>
<dbReference type="GO" id="GO:0020037">
    <property type="term" value="F:heme binding"/>
    <property type="evidence" value="ECO:0007669"/>
    <property type="project" value="InterPro"/>
</dbReference>
<dbReference type="GO" id="GO:0046872">
    <property type="term" value="F:metal ion binding"/>
    <property type="evidence" value="ECO:0007669"/>
    <property type="project" value="UniProtKB-KW"/>
</dbReference>
<dbReference type="GO" id="GO:0008941">
    <property type="term" value="F:nitric oxide dioxygenase NAD(P)H activity"/>
    <property type="evidence" value="ECO:0007669"/>
    <property type="project" value="UniProtKB-UniRule"/>
</dbReference>
<dbReference type="GO" id="GO:0019825">
    <property type="term" value="F:oxygen binding"/>
    <property type="evidence" value="ECO:0007669"/>
    <property type="project" value="InterPro"/>
</dbReference>
<dbReference type="GO" id="GO:0005344">
    <property type="term" value="F:oxygen carrier activity"/>
    <property type="evidence" value="ECO:0007669"/>
    <property type="project" value="UniProtKB-UniRule"/>
</dbReference>
<dbReference type="GO" id="GO:0071500">
    <property type="term" value="P:cellular response to nitrosative stress"/>
    <property type="evidence" value="ECO:0007669"/>
    <property type="project" value="TreeGrafter"/>
</dbReference>
<dbReference type="GO" id="GO:0046210">
    <property type="term" value="P:nitric oxide catabolic process"/>
    <property type="evidence" value="ECO:0007669"/>
    <property type="project" value="TreeGrafter"/>
</dbReference>
<dbReference type="GO" id="GO:0009636">
    <property type="term" value="P:response to toxic substance"/>
    <property type="evidence" value="ECO:0007669"/>
    <property type="project" value="UniProtKB-KW"/>
</dbReference>
<dbReference type="CDD" id="cd06184">
    <property type="entry name" value="flavohem_like_fad_nad_binding"/>
    <property type="match status" value="1"/>
</dbReference>
<dbReference type="FunFam" id="1.10.490.10:FF:000003">
    <property type="entry name" value="Flavohemoprotein"/>
    <property type="match status" value="1"/>
</dbReference>
<dbReference type="FunFam" id="2.40.30.10:FF:000034">
    <property type="entry name" value="Flavohemoprotein"/>
    <property type="match status" value="1"/>
</dbReference>
<dbReference type="FunFam" id="3.40.50.80:FF:000010">
    <property type="entry name" value="Flavohemoprotein"/>
    <property type="match status" value="1"/>
</dbReference>
<dbReference type="Gene3D" id="1.10.490.10">
    <property type="entry name" value="Globins"/>
    <property type="match status" value="1"/>
</dbReference>
<dbReference type="Gene3D" id="3.40.50.80">
    <property type="entry name" value="Nucleotide-binding domain of ferredoxin-NADP reductase (FNR) module"/>
    <property type="match status" value="1"/>
</dbReference>
<dbReference type="Gene3D" id="2.40.30.10">
    <property type="entry name" value="Translation factors"/>
    <property type="match status" value="1"/>
</dbReference>
<dbReference type="HAMAP" id="MF_01252">
    <property type="entry name" value="Hmp"/>
    <property type="match status" value="1"/>
</dbReference>
<dbReference type="InterPro" id="IPR008333">
    <property type="entry name" value="Cbr1-like_FAD-bd_dom"/>
</dbReference>
<dbReference type="InterPro" id="IPR017927">
    <property type="entry name" value="FAD-bd_FR_type"/>
</dbReference>
<dbReference type="InterPro" id="IPR039261">
    <property type="entry name" value="FNR_nucleotide-bd"/>
</dbReference>
<dbReference type="InterPro" id="IPR000971">
    <property type="entry name" value="Globin"/>
</dbReference>
<dbReference type="InterPro" id="IPR009050">
    <property type="entry name" value="Globin-like_sf"/>
</dbReference>
<dbReference type="InterPro" id="IPR012292">
    <property type="entry name" value="Globin/Proto"/>
</dbReference>
<dbReference type="InterPro" id="IPR023950">
    <property type="entry name" value="Hmp"/>
</dbReference>
<dbReference type="InterPro" id="IPR001433">
    <property type="entry name" value="OxRdtase_FAD/NAD-bd"/>
</dbReference>
<dbReference type="InterPro" id="IPR017938">
    <property type="entry name" value="Riboflavin_synthase-like_b-brl"/>
</dbReference>
<dbReference type="NCBIfam" id="NF009805">
    <property type="entry name" value="PRK13289.1"/>
    <property type="match status" value="1"/>
</dbReference>
<dbReference type="PANTHER" id="PTHR43396">
    <property type="entry name" value="FLAVOHEMOPROTEIN"/>
    <property type="match status" value="1"/>
</dbReference>
<dbReference type="PANTHER" id="PTHR43396:SF3">
    <property type="entry name" value="FLAVOHEMOPROTEIN"/>
    <property type="match status" value="1"/>
</dbReference>
<dbReference type="Pfam" id="PF00970">
    <property type="entry name" value="FAD_binding_6"/>
    <property type="match status" value="1"/>
</dbReference>
<dbReference type="Pfam" id="PF00042">
    <property type="entry name" value="Globin"/>
    <property type="match status" value="1"/>
</dbReference>
<dbReference type="Pfam" id="PF00175">
    <property type="entry name" value="NAD_binding_1"/>
    <property type="match status" value="1"/>
</dbReference>
<dbReference type="PRINTS" id="PR00410">
    <property type="entry name" value="PHEHYDRXLASE"/>
</dbReference>
<dbReference type="SUPFAM" id="SSF52343">
    <property type="entry name" value="Ferredoxin reductase-like, C-terminal NADP-linked domain"/>
    <property type="match status" value="1"/>
</dbReference>
<dbReference type="SUPFAM" id="SSF46458">
    <property type="entry name" value="Globin-like"/>
    <property type="match status" value="1"/>
</dbReference>
<dbReference type="SUPFAM" id="SSF63380">
    <property type="entry name" value="Riboflavin synthase domain-like"/>
    <property type="match status" value="1"/>
</dbReference>
<dbReference type="PROSITE" id="PS51384">
    <property type="entry name" value="FAD_FR"/>
    <property type="match status" value="1"/>
</dbReference>
<dbReference type="PROSITE" id="PS01033">
    <property type="entry name" value="GLOBIN"/>
    <property type="match status" value="1"/>
</dbReference>